<proteinExistence type="evidence at protein level"/>
<evidence type="ECO:0000250" key="1"/>
<evidence type="ECO:0000255" key="2">
    <source>
        <dbReference type="PROSITE-ProRule" id="PRU00981"/>
    </source>
</evidence>
<evidence type="ECO:0000256" key="3">
    <source>
        <dbReference type="SAM" id="MobiDB-lite"/>
    </source>
</evidence>
<evidence type="ECO:0000269" key="4">
    <source>
    </source>
</evidence>
<evidence type="ECO:0000269" key="5">
    <source>
    </source>
</evidence>
<evidence type="ECO:0000303" key="6">
    <source>
    </source>
</evidence>
<evidence type="ECO:0000305" key="7"/>
<gene>
    <name type="primary">TIP2</name>
    <name evidence="7" type="synonym">BHLH142</name>
    <name type="ordered locus">LOC_Os01g18870</name>
    <name type="ordered locus">Os01g0293100</name>
    <name type="ORF">P0706B05.43</name>
</gene>
<organism>
    <name type="scientific">Oryza sativa subsp. japonica</name>
    <name type="common">Rice</name>
    <dbReference type="NCBI Taxonomy" id="39947"/>
    <lineage>
        <taxon>Eukaryota</taxon>
        <taxon>Viridiplantae</taxon>
        <taxon>Streptophyta</taxon>
        <taxon>Embryophyta</taxon>
        <taxon>Tracheophyta</taxon>
        <taxon>Spermatophyta</taxon>
        <taxon>Magnoliopsida</taxon>
        <taxon>Liliopsida</taxon>
        <taxon>Poales</taxon>
        <taxon>Poaceae</taxon>
        <taxon>BOP clade</taxon>
        <taxon>Oryzoideae</taxon>
        <taxon>Oryzeae</taxon>
        <taxon>Oryzinae</taxon>
        <taxon>Oryza</taxon>
        <taxon>Oryza sativa</taxon>
    </lineage>
</organism>
<accession>Q5JNS0</accession>
<accession>A0A0P0V176</accession>
<sequence>MYHPQCELLMPLESLEMDVGQSHLAAAVAAAMPGELNFHLLHSLDAAAAAASSTAASASSQPTVDYFFGGADQQPPPPAAMQYDQLAAPHHHQTVAMLRDYYGGHYPPAAAAAAATEAYFRGGPRTAGSSSLVFGPADDESAFMVGPFESSPTPRSGGGRKRSRATAGFHGGGPANGVEKKEKQRRLRLTEKYNALMLLIPNRTKEDRATVISDAIEYIQELGRTVEELTLLVEKKRRRREMQGDVVDAATSSVVAGMDQAAESSEGEVMAAAAMGAVAPPPRQAPIRSTYIQRRSKETFVDVRIVEDDVNIKLTKRRRDGCLAAASRALDDLRLDLVHLSGGKIGDCHIYMFNTKIHSGSPVFASAVASRLIEVVDEY</sequence>
<feature type="chain" id="PRO_0000429745" description="Transcription factor TIP2">
    <location>
        <begin position="1"/>
        <end position="379"/>
    </location>
</feature>
<feature type="domain" description="bHLH" evidence="2">
    <location>
        <begin position="173"/>
        <end position="222"/>
    </location>
</feature>
<feature type="region of interest" description="Disordered" evidence="3">
    <location>
        <begin position="144"/>
        <end position="184"/>
    </location>
</feature>
<feature type="region of interest" description="Basic motif; degenerate" evidence="2">
    <location>
        <begin position="173"/>
        <end position="186"/>
    </location>
</feature>
<feature type="region of interest" description="Helix-loop-helix motif" evidence="2">
    <location>
        <begin position="187"/>
        <end position="222"/>
    </location>
</feature>
<reference key="1">
    <citation type="journal article" date="2002" name="Nature">
        <title>The genome sequence and structure of rice chromosome 1.</title>
        <authorList>
            <person name="Sasaki T."/>
            <person name="Matsumoto T."/>
            <person name="Yamamoto K."/>
            <person name="Sakata K."/>
            <person name="Baba T."/>
            <person name="Katayose Y."/>
            <person name="Wu J."/>
            <person name="Niimura Y."/>
            <person name="Cheng Z."/>
            <person name="Nagamura Y."/>
            <person name="Antonio B.A."/>
            <person name="Kanamori H."/>
            <person name="Hosokawa S."/>
            <person name="Masukawa M."/>
            <person name="Arikawa K."/>
            <person name="Chiden Y."/>
            <person name="Hayashi M."/>
            <person name="Okamoto M."/>
            <person name="Ando T."/>
            <person name="Aoki H."/>
            <person name="Arita K."/>
            <person name="Hamada M."/>
            <person name="Harada C."/>
            <person name="Hijishita S."/>
            <person name="Honda M."/>
            <person name="Ichikawa Y."/>
            <person name="Idonuma A."/>
            <person name="Iijima M."/>
            <person name="Ikeda M."/>
            <person name="Ikeno M."/>
            <person name="Ito S."/>
            <person name="Ito T."/>
            <person name="Ito Y."/>
            <person name="Ito Y."/>
            <person name="Iwabuchi A."/>
            <person name="Kamiya K."/>
            <person name="Karasawa W."/>
            <person name="Katagiri S."/>
            <person name="Kikuta A."/>
            <person name="Kobayashi N."/>
            <person name="Kono I."/>
            <person name="Machita K."/>
            <person name="Maehara T."/>
            <person name="Mizuno H."/>
            <person name="Mizubayashi T."/>
            <person name="Mukai Y."/>
            <person name="Nagasaki H."/>
            <person name="Nakashima M."/>
            <person name="Nakama Y."/>
            <person name="Nakamichi Y."/>
            <person name="Nakamura M."/>
            <person name="Namiki N."/>
            <person name="Negishi M."/>
            <person name="Ohta I."/>
            <person name="Ono N."/>
            <person name="Saji S."/>
            <person name="Sakai K."/>
            <person name="Shibata M."/>
            <person name="Shimokawa T."/>
            <person name="Shomura A."/>
            <person name="Song J."/>
            <person name="Takazaki Y."/>
            <person name="Terasawa K."/>
            <person name="Tsuji K."/>
            <person name="Waki K."/>
            <person name="Yamagata H."/>
            <person name="Yamane H."/>
            <person name="Yoshiki S."/>
            <person name="Yoshihara R."/>
            <person name="Yukawa K."/>
            <person name="Zhong H."/>
            <person name="Iwama H."/>
            <person name="Endo T."/>
            <person name="Ito H."/>
            <person name="Hahn J.H."/>
            <person name="Kim H.-I."/>
            <person name="Eun M.-Y."/>
            <person name="Yano M."/>
            <person name="Jiang J."/>
            <person name="Gojobori T."/>
        </authorList>
    </citation>
    <scope>NUCLEOTIDE SEQUENCE [LARGE SCALE GENOMIC DNA]</scope>
    <source>
        <strain>cv. Nipponbare</strain>
    </source>
</reference>
<reference key="2">
    <citation type="journal article" date="2005" name="Nature">
        <title>The map-based sequence of the rice genome.</title>
        <authorList>
            <consortium name="International rice genome sequencing project (IRGSP)"/>
        </authorList>
    </citation>
    <scope>NUCLEOTIDE SEQUENCE [LARGE SCALE GENOMIC DNA]</scope>
    <source>
        <strain>cv. Nipponbare</strain>
    </source>
</reference>
<reference key="3">
    <citation type="journal article" date="2008" name="Nucleic Acids Res.">
        <title>The rice annotation project database (RAP-DB): 2008 update.</title>
        <authorList>
            <consortium name="The rice annotation project (RAP)"/>
        </authorList>
    </citation>
    <scope>GENOME REANNOTATION</scope>
    <source>
        <strain>cv. Nipponbare</strain>
    </source>
</reference>
<reference key="4">
    <citation type="journal article" date="2013" name="Rice">
        <title>Improvement of the Oryza sativa Nipponbare reference genome using next generation sequence and optical map data.</title>
        <authorList>
            <person name="Kawahara Y."/>
            <person name="de la Bastide M."/>
            <person name="Hamilton J.P."/>
            <person name="Kanamori H."/>
            <person name="McCombie W.R."/>
            <person name="Ouyang S."/>
            <person name="Schwartz D.C."/>
            <person name="Tanaka T."/>
            <person name="Wu J."/>
            <person name="Zhou S."/>
            <person name="Childs K.L."/>
            <person name="Davidson R.M."/>
            <person name="Lin H."/>
            <person name="Quesada-Ocampo L."/>
            <person name="Vaillancourt B."/>
            <person name="Sakai H."/>
            <person name="Lee S.S."/>
            <person name="Kim J."/>
            <person name="Numa H."/>
            <person name="Itoh T."/>
            <person name="Buell C.R."/>
            <person name="Matsumoto T."/>
        </authorList>
    </citation>
    <scope>GENOME REANNOTATION</scope>
    <source>
        <strain>cv. Nipponbare</strain>
    </source>
</reference>
<reference key="5">
    <citation type="journal article" date="2006" name="Plant Physiol.">
        <title>Genome-wide analysis of basic/helix-loop-helix transcription factor family in rice and Arabidopsis.</title>
        <authorList>
            <person name="Li X."/>
            <person name="Duan X."/>
            <person name="Jiang H."/>
            <person name="Sun Y."/>
            <person name="Tang Y."/>
            <person name="Yuan Z."/>
            <person name="Guo J."/>
            <person name="Liang W."/>
            <person name="Chen L."/>
            <person name="Yin J."/>
            <person name="Ma H."/>
            <person name="Wang J."/>
            <person name="Zhang D."/>
        </authorList>
    </citation>
    <scope>GENE FAMILY</scope>
    <scope>NOMENCLATURE</scope>
</reference>
<reference key="6">
    <citation type="journal article" date="2014" name="Plant Cell">
        <title>The rice basic helix-loop-helix transcription factor TDR INTERACTING PROTEIN2 is a central switch in early anther development.</title>
        <authorList>
            <person name="Fu Z."/>
            <person name="Yu J."/>
            <person name="Cheng X."/>
            <person name="Zong X."/>
            <person name="Xu J."/>
            <person name="Chen M."/>
            <person name="Li Z."/>
            <person name="Zhang D."/>
            <person name="Liang W."/>
        </authorList>
    </citation>
    <scope>FUNCTION</scope>
    <scope>INTERACTION WITH TDR</scope>
    <scope>SUBCELLULAR LOCATION</scope>
    <scope>TISSUE SPECIFICITY</scope>
    <scope>DISRUPTION PHENOTYPE</scope>
    <source>
        <strain>cv. 9522</strain>
    </source>
</reference>
<reference key="7">
    <citation type="journal article" date="2014" name="Plant Cell">
        <title>The bHLH142 transcription factor coordinates with TDR1 to modulate the expression of EAT1 and regulate pollen development in rice.</title>
        <authorList>
            <person name="Ko S.S."/>
            <person name="Li M.J."/>
            <person name="Sun-Ben Ku M."/>
            <person name="Ho Y.C."/>
            <person name="Lin Y.J."/>
            <person name="Chuang M.H."/>
            <person name="Hsing H.X."/>
            <person name="Lien Y.C."/>
            <person name="Yang H.T."/>
            <person name="Chang H.C."/>
            <person name="Chan M.T."/>
        </authorList>
    </citation>
    <scope>FUNCTION</scope>
    <scope>INTERACTION WITH TDR</scope>
</reference>
<dbReference type="EMBL" id="AP002482">
    <property type="protein sequence ID" value="BAD86887.1"/>
    <property type="molecule type" value="Genomic_DNA"/>
</dbReference>
<dbReference type="EMBL" id="AP008207">
    <property type="protein sequence ID" value="BAF04709.1"/>
    <property type="molecule type" value="Genomic_DNA"/>
</dbReference>
<dbReference type="EMBL" id="AP014957">
    <property type="protein sequence ID" value="BAS71669.1"/>
    <property type="molecule type" value="Genomic_DNA"/>
</dbReference>
<dbReference type="RefSeq" id="XP_015645943.1">
    <property type="nucleotide sequence ID" value="XM_015790457.1"/>
</dbReference>
<dbReference type="SMR" id="Q5JNS0"/>
<dbReference type="FunCoup" id="Q5JNS0">
    <property type="interactions" value="139"/>
</dbReference>
<dbReference type="STRING" id="39947.Q5JNS0"/>
<dbReference type="PaxDb" id="39947-Q5JNS0"/>
<dbReference type="EnsemblPlants" id="Os01t0293100-01">
    <property type="protein sequence ID" value="Os01t0293100-01"/>
    <property type="gene ID" value="Os01g0293100"/>
</dbReference>
<dbReference type="Gramene" id="Os01t0293100-01">
    <property type="protein sequence ID" value="Os01t0293100-01"/>
    <property type="gene ID" value="Os01g0293100"/>
</dbReference>
<dbReference type="KEGG" id="dosa:Os01g0293100"/>
<dbReference type="eggNOG" id="ENOG502SM54">
    <property type="taxonomic scope" value="Eukaryota"/>
</dbReference>
<dbReference type="HOGENOM" id="CLU_730377_0_0_1"/>
<dbReference type="InParanoid" id="Q5JNS0"/>
<dbReference type="OMA" id="LMHLIPN"/>
<dbReference type="OrthoDB" id="1932168at2759"/>
<dbReference type="PlantReactome" id="R-OSA-8986768">
    <property type="pathway name" value="Anther and pollen development"/>
</dbReference>
<dbReference type="Proteomes" id="UP000000763">
    <property type="component" value="Chromosome 1"/>
</dbReference>
<dbReference type="Proteomes" id="UP000059680">
    <property type="component" value="Chromosome 1"/>
</dbReference>
<dbReference type="GO" id="GO:0005634">
    <property type="term" value="C:nucleus"/>
    <property type="evidence" value="ECO:0000305"/>
    <property type="project" value="Gramene"/>
</dbReference>
<dbReference type="GO" id="GO:0003677">
    <property type="term" value="F:DNA binding"/>
    <property type="evidence" value="ECO:0007669"/>
    <property type="project" value="UniProtKB-KW"/>
</dbReference>
<dbReference type="GO" id="GO:0046983">
    <property type="term" value="F:protein dimerization activity"/>
    <property type="evidence" value="ECO:0007669"/>
    <property type="project" value="InterPro"/>
</dbReference>
<dbReference type="GO" id="GO:0048658">
    <property type="term" value="P:anther wall tapetum development"/>
    <property type="evidence" value="ECO:0007669"/>
    <property type="project" value="InterPro"/>
</dbReference>
<dbReference type="GO" id="GO:0006355">
    <property type="term" value="P:regulation of DNA-templated transcription"/>
    <property type="evidence" value="ECO:0000305"/>
    <property type="project" value="Gramene"/>
</dbReference>
<dbReference type="CDD" id="cd18918">
    <property type="entry name" value="bHLH_AtMYC1_like"/>
    <property type="match status" value="1"/>
</dbReference>
<dbReference type="Gene3D" id="4.10.280.10">
    <property type="entry name" value="Helix-loop-helix DNA-binding domain"/>
    <property type="match status" value="1"/>
</dbReference>
<dbReference type="InterPro" id="IPR045895">
    <property type="entry name" value="bHLH91-like"/>
</dbReference>
<dbReference type="InterPro" id="IPR011598">
    <property type="entry name" value="bHLH_dom"/>
</dbReference>
<dbReference type="InterPro" id="IPR036638">
    <property type="entry name" value="HLH_DNA-bd_sf"/>
</dbReference>
<dbReference type="InterPro" id="IPR045896">
    <property type="entry name" value="MYC1-like_bHLH"/>
</dbReference>
<dbReference type="PANTHER" id="PTHR46834">
    <property type="entry name" value="TRANSCRIPTION FACTOR BHLH91"/>
    <property type="match status" value="1"/>
</dbReference>
<dbReference type="PANTHER" id="PTHR46834:SF2">
    <property type="entry name" value="TRANSCRIPTION FACTOR TIP2"/>
    <property type="match status" value="1"/>
</dbReference>
<dbReference type="Pfam" id="PF00010">
    <property type="entry name" value="HLH"/>
    <property type="match status" value="1"/>
</dbReference>
<dbReference type="SMART" id="SM00353">
    <property type="entry name" value="HLH"/>
    <property type="match status" value="1"/>
</dbReference>
<dbReference type="SUPFAM" id="SSF47459">
    <property type="entry name" value="HLH, helix-loop-helix DNA-binding domain"/>
    <property type="match status" value="1"/>
</dbReference>
<dbReference type="PROSITE" id="PS50888">
    <property type="entry name" value="BHLH"/>
    <property type="match status" value="1"/>
</dbReference>
<keyword id="KW-0238">DNA-binding</keyword>
<keyword id="KW-0539">Nucleus</keyword>
<keyword id="KW-1185">Reference proteome</keyword>
<keyword id="KW-0804">Transcription</keyword>
<keyword id="KW-0805">Transcription regulation</keyword>
<name>TIP2_ORYSJ</name>
<comment type="function">
    <text evidence="4 5">Transcription factor that binds to the E-box-containing promoter regions of the transcription factors TDR and EAT1, activating their expression. May have a role in specifying the cell pattern of the inner anther walls and functioning in meiosis progression. Required for male reproduction (PubMed:24755456). Acts downstream of UDT1 and GAMYB, but upstream of TDR1 and EAT1 in pollen development (PubMed:24894043).</text>
</comment>
<comment type="subunit">
    <text evidence="1 4 5">Homodimer (By similarity). Interacts with TDR, but not with EAT1 (PubMed:24755456, PubMed:24894043).</text>
</comment>
<comment type="subcellular location">
    <subcellularLocation>
        <location evidence="2 4">Nucleus</location>
    </subcellularLocation>
</comment>
<comment type="tissue specificity">
    <text evidence="4">Highly expressed in anthers; strong expression in the middle layer and tapetum, and weak expression in the endothecium.</text>
</comment>
<comment type="developmental stage">
    <text>In anthers, expressed from the meiosis stage to mitosis, with maximum levels at stages 7 and 8, when meiosis initiates, and when endothecium and the middle layer become condensed, respectively.</text>
</comment>
<comment type="disruption phenotype">
    <text evidence="4">Has normal vegetative growth, inflorescence and flower morphology, however has smaller anthers and does not produce mature pollen grains during reproductive stage. After stage 6, during which anther forms four somatic layers, the three inner anther wall layers remain undifferentiated. Meiosis progresses normally from leptotene stage to metaphase I, but is arrasted at anaphase I and no cytokinesis occurs at prophase II, resulting in degenerated meiocytes.</text>
</comment>
<comment type="similarity">
    <text>Belongs to the bHLH protein family.</text>
</comment>
<protein>
    <recommendedName>
        <fullName>Transcription factor TIP2</fullName>
    </recommendedName>
    <alternativeName>
        <fullName evidence="7">Basic helix-loop-helix protein 142</fullName>
        <shortName evidence="6">OsbHLH142</shortName>
    </alternativeName>
    <alternativeName>
        <fullName>Basic helix-loop-helix protein TIP2</fullName>
    </alternativeName>
    <alternativeName>
        <fullName>TDR INTERACTING PROTEIN2</fullName>
    </alternativeName>
</protein>